<accession>Q9UEW3</accession>
<accession>B4DW79</accession>
<accession>Q9Y5S3</accession>
<dbReference type="EMBL" id="AF035819">
    <property type="protein sequence ID" value="AAC08800.1"/>
    <property type="molecule type" value="mRNA"/>
</dbReference>
<dbReference type="EMBL" id="AF128186">
    <property type="protein sequence ID" value="AAD41064.1"/>
    <property type="molecule type" value="Genomic_DNA"/>
</dbReference>
<dbReference type="EMBL" id="AF128172">
    <property type="protein sequence ID" value="AAD41064.1"/>
    <property type="status" value="JOINED"/>
    <property type="molecule type" value="Genomic_DNA"/>
</dbReference>
<dbReference type="EMBL" id="AF128173">
    <property type="protein sequence ID" value="AAD41064.1"/>
    <property type="status" value="JOINED"/>
    <property type="molecule type" value="Genomic_DNA"/>
</dbReference>
<dbReference type="EMBL" id="AF128174">
    <property type="protein sequence ID" value="AAD41064.1"/>
    <property type="status" value="JOINED"/>
    <property type="molecule type" value="Genomic_DNA"/>
</dbReference>
<dbReference type="EMBL" id="AF128175">
    <property type="protein sequence ID" value="AAD41064.1"/>
    <property type="status" value="JOINED"/>
    <property type="molecule type" value="Genomic_DNA"/>
</dbReference>
<dbReference type="EMBL" id="AF128176">
    <property type="protein sequence ID" value="AAD41064.1"/>
    <property type="status" value="JOINED"/>
    <property type="molecule type" value="Genomic_DNA"/>
</dbReference>
<dbReference type="EMBL" id="AF128177">
    <property type="protein sequence ID" value="AAD41064.1"/>
    <property type="status" value="JOINED"/>
    <property type="molecule type" value="Genomic_DNA"/>
</dbReference>
<dbReference type="EMBL" id="AF128178">
    <property type="protein sequence ID" value="AAD41064.1"/>
    <property type="status" value="JOINED"/>
    <property type="molecule type" value="Genomic_DNA"/>
</dbReference>
<dbReference type="EMBL" id="AF128179">
    <property type="protein sequence ID" value="AAD41064.1"/>
    <property type="status" value="JOINED"/>
    <property type="molecule type" value="Genomic_DNA"/>
</dbReference>
<dbReference type="EMBL" id="AF128180">
    <property type="protein sequence ID" value="AAD41064.1"/>
    <property type="status" value="JOINED"/>
    <property type="molecule type" value="Genomic_DNA"/>
</dbReference>
<dbReference type="EMBL" id="AF128181">
    <property type="protein sequence ID" value="AAD41064.1"/>
    <property type="status" value="JOINED"/>
    <property type="molecule type" value="Genomic_DNA"/>
</dbReference>
<dbReference type="EMBL" id="AF128182">
    <property type="protein sequence ID" value="AAD41064.1"/>
    <property type="status" value="JOINED"/>
    <property type="molecule type" value="Genomic_DNA"/>
</dbReference>
<dbReference type="EMBL" id="AF128183">
    <property type="protein sequence ID" value="AAD41064.1"/>
    <property type="status" value="JOINED"/>
    <property type="molecule type" value="Genomic_DNA"/>
</dbReference>
<dbReference type="EMBL" id="AF128184">
    <property type="protein sequence ID" value="AAD41064.1"/>
    <property type="status" value="JOINED"/>
    <property type="molecule type" value="Genomic_DNA"/>
</dbReference>
<dbReference type="EMBL" id="AF128185">
    <property type="protein sequence ID" value="AAD41064.1"/>
    <property type="status" value="JOINED"/>
    <property type="molecule type" value="Genomic_DNA"/>
</dbReference>
<dbReference type="EMBL" id="AK301407">
    <property type="protein sequence ID" value="BAG62941.1"/>
    <property type="molecule type" value="mRNA"/>
</dbReference>
<dbReference type="EMBL" id="AC013457">
    <property type="status" value="NOT_ANNOTATED_CDS"/>
    <property type="molecule type" value="Genomic_DNA"/>
</dbReference>
<dbReference type="EMBL" id="BC016004">
    <property type="protein sequence ID" value="AAH16004.1"/>
    <property type="molecule type" value="mRNA"/>
</dbReference>
<dbReference type="CCDS" id="CCDS2124.1">
    <molecule id="Q9UEW3-1"/>
</dbReference>
<dbReference type="RefSeq" id="NP_006761.1">
    <molecule id="Q9UEW3-1"/>
    <property type="nucleotide sequence ID" value="NM_006770.4"/>
</dbReference>
<dbReference type="RefSeq" id="XP_011510384.1">
    <molecule id="Q9UEW3-1"/>
    <property type="nucleotide sequence ID" value="XM_011512082.3"/>
</dbReference>
<dbReference type="RefSeq" id="XP_054200304.1">
    <molecule id="Q9UEW3-1"/>
    <property type="nucleotide sequence ID" value="XM_054344329.1"/>
</dbReference>
<dbReference type="SMR" id="Q9UEW3"/>
<dbReference type="BioGRID" id="114232">
    <property type="interactions" value="15"/>
</dbReference>
<dbReference type="FunCoup" id="Q9UEW3">
    <property type="interactions" value="165"/>
</dbReference>
<dbReference type="IntAct" id="Q9UEW3">
    <property type="interactions" value="5"/>
</dbReference>
<dbReference type="MINT" id="Q9UEW3"/>
<dbReference type="STRING" id="9606.ENSP00000318916"/>
<dbReference type="DrugBank" id="DB11132">
    <property type="generic name" value="Silicon dioxide"/>
</dbReference>
<dbReference type="DrugBank" id="DB09536">
    <property type="generic name" value="Titanium dioxide"/>
</dbReference>
<dbReference type="GlyConnect" id="1957">
    <property type="glycosylation" value="9 N-Linked glycans (1 site)"/>
</dbReference>
<dbReference type="GlyCosmos" id="Q9UEW3">
    <property type="glycosylation" value="2 sites, 9 glycans"/>
</dbReference>
<dbReference type="GlyGen" id="Q9UEW3">
    <property type="glycosylation" value="4 sites, 9 N-linked glycans (1 site), 1 O-linked glycan (1 site)"/>
</dbReference>
<dbReference type="iPTMnet" id="Q9UEW3"/>
<dbReference type="PhosphoSitePlus" id="Q9UEW3"/>
<dbReference type="BioMuta" id="MARCO"/>
<dbReference type="DMDM" id="17380151"/>
<dbReference type="jPOST" id="Q9UEW3"/>
<dbReference type="MassIVE" id="Q9UEW3"/>
<dbReference type="PaxDb" id="9606-ENSP00000318916"/>
<dbReference type="PeptideAtlas" id="Q9UEW3"/>
<dbReference type="ProteomicsDB" id="5319"/>
<dbReference type="ProteomicsDB" id="84158">
    <molecule id="Q9UEW3-1"/>
</dbReference>
<dbReference type="ABCD" id="Q9UEW3">
    <property type="antibodies" value="1 sequenced antibody"/>
</dbReference>
<dbReference type="Antibodypedia" id="41307">
    <property type="antibodies" value="252 antibodies from 28 providers"/>
</dbReference>
<dbReference type="DNASU" id="8685"/>
<dbReference type="Ensembl" id="ENST00000327097.5">
    <molecule id="Q9UEW3-1"/>
    <property type="protein sequence ID" value="ENSP00000318916.4"/>
    <property type="gene ID" value="ENSG00000019169.11"/>
</dbReference>
<dbReference type="GeneID" id="8685"/>
<dbReference type="KEGG" id="hsa:8685"/>
<dbReference type="MANE-Select" id="ENST00000327097.5">
    <property type="protein sequence ID" value="ENSP00000318916.4"/>
    <property type="RefSeq nucleotide sequence ID" value="NM_006770.4"/>
    <property type="RefSeq protein sequence ID" value="NP_006761.1"/>
</dbReference>
<dbReference type="UCSC" id="uc002tln.2">
    <molecule id="Q9UEW3-1"/>
    <property type="organism name" value="human"/>
</dbReference>
<dbReference type="AGR" id="HGNC:6895"/>
<dbReference type="CTD" id="8685"/>
<dbReference type="DisGeNET" id="8685"/>
<dbReference type="GeneCards" id="MARCO"/>
<dbReference type="HGNC" id="HGNC:6895">
    <property type="gene designation" value="MARCO"/>
</dbReference>
<dbReference type="HPA" id="ENSG00000019169">
    <property type="expression patterns" value="Tissue enhanced (liver, lung, lymphoid tissue)"/>
</dbReference>
<dbReference type="MIM" id="604870">
    <property type="type" value="gene"/>
</dbReference>
<dbReference type="neXtProt" id="NX_Q9UEW3"/>
<dbReference type="OpenTargets" id="ENSG00000019169"/>
<dbReference type="PharmGKB" id="PA30638"/>
<dbReference type="VEuPathDB" id="HostDB:ENSG00000019169"/>
<dbReference type="eggNOG" id="ENOG502QWN1">
    <property type="taxonomic scope" value="Eukaryota"/>
</dbReference>
<dbReference type="GeneTree" id="ENSGT00950000183074"/>
<dbReference type="HOGENOM" id="CLU_039737_0_0_1"/>
<dbReference type="InParanoid" id="Q9UEW3"/>
<dbReference type="OMA" id="GMFGIKG"/>
<dbReference type="OrthoDB" id="10037288at2759"/>
<dbReference type="PAN-GO" id="Q9UEW3">
    <property type="GO annotations" value="4 GO annotations based on evolutionary models"/>
</dbReference>
<dbReference type="PhylomeDB" id="Q9UEW3"/>
<dbReference type="TreeFam" id="TF330855"/>
<dbReference type="PathwayCommons" id="Q9UEW3"/>
<dbReference type="Reactome" id="R-HSA-3000480">
    <property type="pathway name" value="Scavenging by Class A Receptors"/>
</dbReference>
<dbReference type="SignaLink" id="Q9UEW3"/>
<dbReference type="SIGNOR" id="Q9UEW3"/>
<dbReference type="BioGRID-ORCS" id="8685">
    <property type="hits" value="9 hits in 1142 CRISPR screens"/>
</dbReference>
<dbReference type="ChiTaRS" id="MARCO">
    <property type="organism name" value="human"/>
</dbReference>
<dbReference type="GeneWiki" id="MARCO"/>
<dbReference type="GenomeRNAi" id="8685"/>
<dbReference type="Pharos" id="Q9UEW3">
    <property type="development level" value="Tbio"/>
</dbReference>
<dbReference type="PRO" id="PR:Q9UEW3"/>
<dbReference type="Proteomes" id="UP000005640">
    <property type="component" value="Chromosome 2"/>
</dbReference>
<dbReference type="RNAct" id="Q9UEW3">
    <property type="molecule type" value="protein"/>
</dbReference>
<dbReference type="Bgee" id="ENSG00000019169">
    <property type="expression patterns" value="Expressed in right lung and 123 other cell types or tissues"/>
</dbReference>
<dbReference type="ExpressionAtlas" id="Q9UEW3">
    <property type="expression patterns" value="baseline and differential"/>
</dbReference>
<dbReference type="GO" id="GO:0005581">
    <property type="term" value="C:collagen trimer"/>
    <property type="evidence" value="ECO:0007669"/>
    <property type="project" value="UniProtKB-KW"/>
</dbReference>
<dbReference type="GO" id="GO:0062023">
    <property type="term" value="C:collagen-containing extracellular matrix"/>
    <property type="evidence" value="ECO:0000318"/>
    <property type="project" value="GO_Central"/>
</dbReference>
<dbReference type="GO" id="GO:0005737">
    <property type="term" value="C:cytoplasm"/>
    <property type="evidence" value="ECO:0000250"/>
    <property type="project" value="ARUK-UCL"/>
</dbReference>
<dbReference type="GO" id="GO:0030666">
    <property type="term" value="C:endocytic vesicle membrane"/>
    <property type="evidence" value="ECO:0000304"/>
    <property type="project" value="Reactome"/>
</dbReference>
<dbReference type="GO" id="GO:0005886">
    <property type="term" value="C:plasma membrane"/>
    <property type="evidence" value="ECO:0000250"/>
    <property type="project" value="ARUK-UCL"/>
</dbReference>
<dbReference type="GO" id="GO:0001540">
    <property type="term" value="F:amyloid-beta binding"/>
    <property type="evidence" value="ECO:0000250"/>
    <property type="project" value="ARUK-UCL"/>
</dbReference>
<dbReference type="GO" id="GO:0038024">
    <property type="term" value="F:cargo receptor activity"/>
    <property type="evidence" value="ECO:0000250"/>
    <property type="project" value="ARUK-UCL"/>
</dbReference>
<dbReference type="GO" id="GO:0001664">
    <property type="term" value="F:G protein-coupled receptor binding"/>
    <property type="evidence" value="ECO:0000353"/>
    <property type="project" value="ARUK-UCL"/>
</dbReference>
<dbReference type="GO" id="GO:0038187">
    <property type="term" value="F:pattern recognition receptor activity"/>
    <property type="evidence" value="ECO:0000304"/>
    <property type="project" value="ProtInc"/>
</dbReference>
<dbReference type="GO" id="GO:0004888">
    <property type="term" value="F:transmembrane signaling receptor activity"/>
    <property type="evidence" value="ECO:0000304"/>
    <property type="project" value="ProtInc"/>
</dbReference>
<dbReference type="GO" id="GO:0007193">
    <property type="term" value="P:adenylate cyclase-inhibiting G protein-coupled receptor signaling pathway"/>
    <property type="evidence" value="ECO:0000250"/>
    <property type="project" value="ARUK-UCL"/>
</dbReference>
<dbReference type="GO" id="GO:0097242">
    <property type="term" value="P:amyloid-beta clearance"/>
    <property type="evidence" value="ECO:0000250"/>
    <property type="project" value="ARUK-UCL"/>
</dbReference>
<dbReference type="GO" id="GO:0043277">
    <property type="term" value="P:apoptotic cell clearance"/>
    <property type="evidence" value="ECO:0007669"/>
    <property type="project" value="Ensembl"/>
</dbReference>
<dbReference type="GO" id="GO:0007166">
    <property type="term" value="P:cell surface receptor signaling pathway"/>
    <property type="evidence" value="ECO:0000304"/>
    <property type="project" value="ProtInc"/>
</dbReference>
<dbReference type="GO" id="GO:0045087">
    <property type="term" value="P:innate immune response"/>
    <property type="evidence" value="ECO:0007669"/>
    <property type="project" value="UniProtKB-KW"/>
</dbReference>
<dbReference type="GO" id="GO:0006911">
    <property type="term" value="P:phagocytosis, engulfment"/>
    <property type="evidence" value="ECO:0000250"/>
    <property type="project" value="ARUK-UCL"/>
</dbReference>
<dbReference type="GO" id="GO:0070374">
    <property type="term" value="P:positive regulation of ERK1 and ERK2 cascade"/>
    <property type="evidence" value="ECO:0000250"/>
    <property type="project" value="ARUK-UCL"/>
</dbReference>
<dbReference type="GO" id="GO:0006898">
    <property type="term" value="P:receptor-mediated endocytosis"/>
    <property type="evidence" value="ECO:0000250"/>
    <property type="project" value="ARUK-UCL"/>
</dbReference>
<dbReference type="FunFam" id="3.10.250.10:FF:000011">
    <property type="entry name" value="Scavenger receptor class A member 5"/>
    <property type="match status" value="1"/>
</dbReference>
<dbReference type="Gene3D" id="3.10.250.10">
    <property type="entry name" value="SRCR-like domain"/>
    <property type="match status" value="1"/>
</dbReference>
<dbReference type="InterPro" id="IPR008160">
    <property type="entry name" value="Collagen"/>
</dbReference>
<dbReference type="InterPro" id="IPR050149">
    <property type="entry name" value="Collagen_superfamily"/>
</dbReference>
<dbReference type="InterPro" id="IPR001190">
    <property type="entry name" value="SRCR"/>
</dbReference>
<dbReference type="InterPro" id="IPR036772">
    <property type="entry name" value="SRCR-like_dom_sf"/>
</dbReference>
<dbReference type="PANTHER" id="PTHR24023">
    <property type="entry name" value="COLLAGEN ALPHA"/>
    <property type="match status" value="1"/>
</dbReference>
<dbReference type="PANTHER" id="PTHR24023:SF1083">
    <property type="entry name" value="MACROPHAGE RECEPTOR MARCO"/>
    <property type="match status" value="1"/>
</dbReference>
<dbReference type="Pfam" id="PF01391">
    <property type="entry name" value="Collagen"/>
    <property type="match status" value="2"/>
</dbReference>
<dbReference type="Pfam" id="PF00530">
    <property type="entry name" value="SRCR"/>
    <property type="match status" value="1"/>
</dbReference>
<dbReference type="PRINTS" id="PR00258">
    <property type="entry name" value="SPERACTRCPTR"/>
</dbReference>
<dbReference type="SMART" id="SM00202">
    <property type="entry name" value="SR"/>
    <property type="match status" value="1"/>
</dbReference>
<dbReference type="SUPFAM" id="SSF56487">
    <property type="entry name" value="SRCR-like"/>
    <property type="match status" value="1"/>
</dbReference>
<dbReference type="PROSITE" id="PS00420">
    <property type="entry name" value="SRCR_1"/>
    <property type="match status" value="1"/>
</dbReference>
<dbReference type="PROSITE" id="PS50287">
    <property type="entry name" value="SRCR_2"/>
    <property type="match status" value="1"/>
</dbReference>
<organism>
    <name type="scientific">Homo sapiens</name>
    <name type="common">Human</name>
    <dbReference type="NCBI Taxonomy" id="9606"/>
    <lineage>
        <taxon>Eukaryota</taxon>
        <taxon>Metazoa</taxon>
        <taxon>Chordata</taxon>
        <taxon>Craniata</taxon>
        <taxon>Vertebrata</taxon>
        <taxon>Euteleostomi</taxon>
        <taxon>Mammalia</taxon>
        <taxon>Eutheria</taxon>
        <taxon>Euarchontoglires</taxon>
        <taxon>Primates</taxon>
        <taxon>Haplorrhini</taxon>
        <taxon>Catarrhini</taxon>
        <taxon>Hominidae</taxon>
        <taxon>Homo</taxon>
    </lineage>
</organism>
<reference key="1">
    <citation type="journal article" date="1998" name="J. Biol. Chem.">
        <title>Structure of the human macrophage MARCO receptor and characterization of its bacteria-binding region.</title>
        <authorList>
            <person name="Elomaa O."/>
            <person name="Sankala M."/>
            <person name="Pikkarainen T."/>
            <person name="Bergmann U."/>
            <person name="Tuuttila A."/>
            <person name="Raatikainen-Ahokas A."/>
            <person name="Sariola H."/>
            <person name="Tryggvason K."/>
        </authorList>
    </citation>
    <scope>NUCLEOTIDE SEQUENCE [MRNA] (ISOFORM 1)</scope>
    <scope>FUNCTION</scope>
    <scope>SUBCELLULAR LOCATION</scope>
    <scope>TISSUE SPECIFICITY</scope>
    <scope>DISULFIDE BONDS</scope>
</reference>
<reference key="2">
    <citation type="journal article" date="1999" name="Genomics">
        <title>Structure and chromosomal localization of the human and murine genes for the macrophage MARCO receptor.</title>
        <authorList>
            <person name="Kangas M."/>
            <person name="Brannstrom A."/>
            <person name="Elomaa O."/>
            <person name="Matsuda Y."/>
            <person name="Eddy R."/>
            <person name="Shows T.B."/>
            <person name="Tryggvason K."/>
        </authorList>
    </citation>
    <scope>NUCLEOTIDE SEQUENCE [GENOMIC DNA]</scope>
</reference>
<reference key="3">
    <citation type="journal article" date="2004" name="Nat. Genet.">
        <title>Complete sequencing and characterization of 21,243 full-length human cDNAs.</title>
        <authorList>
            <person name="Ota T."/>
            <person name="Suzuki Y."/>
            <person name="Nishikawa T."/>
            <person name="Otsuki T."/>
            <person name="Sugiyama T."/>
            <person name="Irie R."/>
            <person name="Wakamatsu A."/>
            <person name="Hayashi K."/>
            <person name="Sato H."/>
            <person name="Nagai K."/>
            <person name="Kimura K."/>
            <person name="Makita H."/>
            <person name="Sekine M."/>
            <person name="Obayashi M."/>
            <person name="Nishi T."/>
            <person name="Shibahara T."/>
            <person name="Tanaka T."/>
            <person name="Ishii S."/>
            <person name="Yamamoto J."/>
            <person name="Saito K."/>
            <person name="Kawai Y."/>
            <person name="Isono Y."/>
            <person name="Nakamura Y."/>
            <person name="Nagahari K."/>
            <person name="Murakami K."/>
            <person name="Yasuda T."/>
            <person name="Iwayanagi T."/>
            <person name="Wagatsuma M."/>
            <person name="Shiratori A."/>
            <person name="Sudo H."/>
            <person name="Hosoiri T."/>
            <person name="Kaku Y."/>
            <person name="Kodaira H."/>
            <person name="Kondo H."/>
            <person name="Sugawara M."/>
            <person name="Takahashi M."/>
            <person name="Kanda K."/>
            <person name="Yokoi T."/>
            <person name="Furuya T."/>
            <person name="Kikkawa E."/>
            <person name="Omura Y."/>
            <person name="Abe K."/>
            <person name="Kamihara K."/>
            <person name="Katsuta N."/>
            <person name="Sato K."/>
            <person name="Tanikawa M."/>
            <person name="Yamazaki M."/>
            <person name="Ninomiya K."/>
            <person name="Ishibashi T."/>
            <person name="Yamashita H."/>
            <person name="Murakawa K."/>
            <person name="Fujimori K."/>
            <person name="Tanai H."/>
            <person name="Kimata M."/>
            <person name="Watanabe M."/>
            <person name="Hiraoka S."/>
            <person name="Chiba Y."/>
            <person name="Ishida S."/>
            <person name="Ono Y."/>
            <person name="Takiguchi S."/>
            <person name="Watanabe S."/>
            <person name="Yosida M."/>
            <person name="Hotuta T."/>
            <person name="Kusano J."/>
            <person name="Kanehori K."/>
            <person name="Takahashi-Fujii A."/>
            <person name="Hara H."/>
            <person name="Tanase T.-O."/>
            <person name="Nomura Y."/>
            <person name="Togiya S."/>
            <person name="Komai F."/>
            <person name="Hara R."/>
            <person name="Takeuchi K."/>
            <person name="Arita M."/>
            <person name="Imose N."/>
            <person name="Musashino K."/>
            <person name="Yuuki H."/>
            <person name="Oshima A."/>
            <person name="Sasaki N."/>
            <person name="Aotsuka S."/>
            <person name="Yoshikawa Y."/>
            <person name="Matsunawa H."/>
            <person name="Ichihara T."/>
            <person name="Shiohata N."/>
            <person name="Sano S."/>
            <person name="Moriya S."/>
            <person name="Momiyama H."/>
            <person name="Satoh N."/>
            <person name="Takami S."/>
            <person name="Terashima Y."/>
            <person name="Suzuki O."/>
            <person name="Nakagawa S."/>
            <person name="Senoh A."/>
            <person name="Mizoguchi H."/>
            <person name="Goto Y."/>
            <person name="Shimizu F."/>
            <person name="Wakebe H."/>
            <person name="Hishigaki H."/>
            <person name="Watanabe T."/>
            <person name="Sugiyama A."/>
            <person name="Takemoto M."/>
            <person name="Kawakami B."/>
            <person name="Yamazaki M."/>
            <person name="Watanabe K."/>
            <person name="Kumagai A."/>
            <person name="Itakura S."/>
            <person name="Fukuzumi Y."/>
            <person name="Fujimori Y."/>
            <person name="Komiyama M."/>
            <person name="Tashiro H."/>
            <person name="Tanigami A."/>
            <person name="Fujiwara T."/>
            <person name="Ono T."/>
            <person name="Yamada K."/>
            <person name="Fujii Y."/>
            <person name="Ozaki K."/>
            <person name="Hirao M."/>
            <person name="Ohmori Y."/>
            <person name="Kawabata A."/>
            <person name="Hikiji T."/>
            <person name="Kobatake N."/>
            <person name="Inagaki H."/>
            <person name="Ikema Y."/>
            <person name="Okamoto S."/>
            <person name="Okitani R."/>
            <person name="Kawakami T."/>
            <person name="Noguchi S."/>
            <person name="Itoh T."/>
            <person name="Shigeta K."/>
            <person name="Senba T."/>
            <person name="Matsumura K."/>
            <person name="Nakajima Y."/>
            <person name="Mizuno T."/>
            <person name="Morinaga M."/>
            <person name="Sasaki M."/>
            <person name="Togashi T."/>
            <person name="Oyama M."/>
            <person name="Hata H."/>
            <person name="Watanabe M."/>
            <person name="Komatsu T."/>
            <person name="Mizushima-Sugano J."/>
            <person name="Satoh T."/>
            <person name="Shirai Y."/>
            <person name="Takahashi Y."/>
            <person name="Nakagawa K."/>
            <person name="Okumura K."/>
            <person name="Nagase T."/>
            <person name="Nomura N."/>
            <person name="Kikuchi H."/>
            <person name="Masuho Y."/>
            <person name="Yamashita R."/>
            <person name="Nakai K."/>
            <person name="Yada T."/>
            <person name="Nakamura Y."/>
            <person name="Ohara O."/>
            <person name="Isogai T."/>
            <person name="Sugano S."/>
        </authorList>
    </citation>
    <scope>NUCLEOTIDE SEQUENCE [LARGE SCALE MRNA] (ISOFORM 2)</scope>
    <source>
        <tissue>Synovium</tissue>
    </source>
</reference>
<reference key="4">
    <citation type="journal article" date="2005" name="Nature">
        <title>Generation and annotation of the DNA sequences of human chromosomes 2 and 4.</title>
        <authorList>
            <person name="Hillier L.W."/>
            <person name="Graves T.A."/>
            <person name="Fulton R.S."/>
            <person name="Fulton L.A."/>
            <person name="Pepin K.H."/>
            <person name="Minx P."/>
            <person name="Wagner-McPherson C."/>
            <person name="Layman D."/>
            <person name="Wylie K."/>
            <person name="Sekhon M."/>
            <person name="Becker M.C."/>
            <person name="Fewell G.A."/>
            <person name="Delehaunty K.D."/>
            <person name="Miner T.L."/>
            <person name="Nash W.E."/>
            <person name="Kremitzki C."/>
            <person name="Oddy L."/>
            <person name="Du H."/>
            <person name="Sun H."/>
            <person name="Bradshaw-Cordum H."/>
            <person name="Ali J."/>
            <person name="Carter J."/>
            <person name="Cordes M."/>
            <person name="Harris A."/>
            <person name="Isak A."/>
            <person name="van Brunt A."/>
            <person name="Nguyen C."/>
            <person name="Du F."/>
            <person name="Courtney L."/>
            <person name="Kalicki J."/>
            <person name="Ozersky P."/>
            <person name="Abbott S."/>
            <person name="Armstrong J."/>
            <person name="Belter E.A."/>
            <person name="Caruso L."/>
            <person name="Cedroni M."/>
            <person name="Cotton M."/>
            <person name="Davidson T."/>
            <person name="Desai A."/>
            <person name="Elliott G."/>
            <person name="Erb T."/>
            <person name="Fronick C."/>
            <person name="Gaige T."/>
            <person name="Haakenson W."/>
            <person name="Haglund K."/>
            <person name="Holmes A."/>
            <person name="Harkins R."/>
            <person name="Kim K."/>
            <person name="Kruchowski S.S."/>
            <person name="Strong C.M."/>
            <person name="Grewal N."/>
            <person name="Goyea E."/>
            <person name="Hou S."/>
            <person name="Levy A."/>
            <person name="Martinka S."/>
            <person name="Mead K."/>
            <person name="McLellan M.D."/>
            <person name="Meyer R."/>
            <person name="Randall-Maher J."/>
            <person name="Tomlinson C."/>
            <person name="Dauphin-Kohlberg S."/>
            <person name="Kozlowicz-Reilly A."/>
            <person name="Shah N."/>
            <person name="Swearengen-Shahid S."/>
            <person name="Snider J."/>
            <person name="Strong J.T."/>
            <person name="Thompson J."/>
            <person name="Yoakum M."/>
            <person name="Leonard S."/>
            <person name="Pearman C."/>
            <person name="Trani L."/>
            <person name="Radionenko M."/>
            <person name="Waligorski J.E."/>
            <person name="Wang C."/>
            <person name="Rock S.M."/>
            <person name="Tin-Wollam A.-M."/>
            <person name="Maupin R."/>
            <person name="Latreille P."/>
            <person name="Wendl M.C."/>
            <person name="Yang S.-P."/>
            <person name="Pohl C."/>
            <person name="Wallis J.W."/>
            <person name="Spieth J."/>
            <person name="Bieri T.A."/>
            <person name="Berkowicz N."/>
            <person name="Nelson J.O."/>
            <person name="Osborne J."/>
            <person name="Ding L."/>
            <person name="Meyer R."/>
            <person name="Sabo A."/>
            <person name="Shotland Y."/>
            <person name="Sinha P."/>
            <person name="Wohldmann P.E."/>
            <person name="Cook L.L."/>
            <person name="Hickenbotham M.T."/>
            <person name="Eldred J."/>
            <person name="Williams D."/>
            <person name="Jones T.A."/>
            <person name="She X."/>
            <person name="Ciccarelli F.D."/>
            <person name="Izaurralde E."/>
            <person name="Taylor J."/>
            <person name="Schmutz J."/>
            <person name="Myers R.M."/>
            <person name="Cox D.R."/>
            <person name="Huang X."/>
            <person name="McPherson J.D."/>
            <person name="Mardis E.R."/>
            <person name="Clifton S.W."/>
            <person name="Warren W.C."/>
            <person name="Chinwalla A.T."/>
            <person name="Eddy S.R."/>
            <person name="Marra M.A."/>
            <person name="Ovcharenko I."/>
            <person name="Furey T.S."/>
            <person name="Miller W."/>
            <person name="Eichler E.E."/>
            <person name="Bork P."/>
            <person name="Suyama M."/>
            <person name="Torrents D."/>
            <person name="Waterston R.H."/>
            <person name="Wilson R.K."/>
        </authorList>
    </citation>
    <scope>NUCLEOTIDE SEQUENCE [LARGE SCALE GENOMIC DNA]</scope>
</reference>
<reference key="5">
    <citation type="journal article" date="2004" name="Genome Res.">
        <title>The status, quality, and expansion of the NIH full-length cDNA project: the Mammalian Gene Collection (MGC).</title>
        <authorList>
            <consortium name="The MGC Project Team"/>
        </authorList>
    </citation>
    <scope>NUCLEOTIDE SEQUENCE [LARGE SCALE MRNA] (ISOFORM 1)</scope>
    <source>
        <tissue>Lung</tissue>
    </source>
</reference>
<reference key="6">
    <citation type="journal article" date="1999" name="J. Exp. Med.">
        <title>Role of the scavenger receptor MARCO in alveolar macrophage binding of unopsonized environmental particles.</title>
        <authorList>
            <person name="Palecanda A."/>
            <person name="Paulauskis J.D."/>
            <person name="Al-Mutairi E."/>
            <person name="Imrich A."/>
            <person name="Qin G."/>
            <person name="Suzuki H."/>
            <person name="Kodama T."/>
            <person name="Tryggvason K."/>
            <person name="Koziel H."/>
            <person name="Kobzik L."/>
        </authorList>
    </citation>
    <scope>TISSUE SPECIFICITY</scope>
</reference>
<reference key="7">
    <citation type="journal article" date="2003" name="J. Immunol.">
        <title>Identification of uteroglobin-related protein 1 and macrophage scavenger receptor with collagenous structure as a lung-specific ligand-receptor pair.</title>
        <authorList>
            <person name="Bin L.H."/>
            <person name="Nielson L.D."/>
            <person name="Liu X."/>
            <person name="Mason R.J."/>
            <person name="Shu H.B."/>
        </authorList>
    </citation>
    <scope>FUNCTION</scope>
</reference>
<reference key="8">
    <citation type="journal article" date="2005" name="J. Proteome Res.">
        <title>Human plasma N-glycoproteome analysis by immunoaffinity subtraction, hydrazide chemistry, and mass spectrometry.</title>
        <authorList>
            <person name="Liu T."/>
            <person name="Qian W.-J."/>
            <person name="Gritsenko M.A."/>
            <person name="Camp D.G. II"/>
            <person name="Monroe M.E."/>
            <person name="Moore R.J."/>
            <person name="Smith R.D."/>
        </authorList>
    </citation>
    <scope>GLYCOSYLATION [LARGE SCALE ANALYSIS] AT ASN-136</scope>
    <source>
        <tissue>Plasma</tissue>
    </source>
</reference>
<reference key="9">
    <citation type="journal article" date="2009" name="J. Proteome Res.">
        <title>Glycoproteomics analysis of human liver tissue by combination of multiple enzyme digestion and hydrazide chemistry.</title>
        <authorList>
            <person name="Chen R."/>
            <person name="Jiang X."/>
            <person name="Sun D."/>
            <person name="Han G."/>
            <person name="Wang F."/>
            <person name="Ye M."/>
            <person name="Wang L."/>
            <person name="Zou H."/>
        </authorList>
    </citation>
    <scope>GLYCOSYLATION [LARGE SCALE ANALYSIS] AT ASN-136</scope>
    <source>
        <tissue>Liver</tissue>
    </source>
</reference>
<reference key="10">
    <citation type="journal article" date="2014" name="J. Proteomics">
        <title>An enzyme assisted RP-RPLC approach for in-depth analysis of human liver phosphoproteome.</title>
        <authorList>
            <person name="Bian Y."/>
            <person name="Song C."/>
            <person name="Cheng K."/>
            <person name="Dong M."/>
            <person name="Wang F."/>
            <person name="Huang J."/>
            <person name="Sun D."/>
            <person name="Wang L."/>
            <person name="Ye M."/>
            <person name="Zou H."/>
        </authorList>
    </citation>
    <scope>IDENTIFICATION BY MASS SPECTROMETRY [LARGE SCALE ANALYSIS]</scope>
    <source>
        <tissue>Liver</tissue>
    </source>
</reference>
<keyword id="KW-0025">Alternative splicing</keyword>
<keyword id="KW-1003">Cell membrane</keyword>
<keyword id="KW-0176">Collagen</keyword>
<keyword id="KW-1015">Disulfide bond</keyword>
<keyword id="KW-0325">Glycoprotein</keyword>
<keyword id="KW-0391">Immunity</keyword>
<keyword id="KW-0399">Innate immunity</keyword>
<keyword id="KW-0472">Membrane</keyword>
<keyword id="KW-1267">Proteomics identification</keyword>
<keyword id="KW-0675">Receptor</keyword>
<keyword id="KW-1185">Reference proteome</keyword>
<keyword id="KW-0735">Signal-anchor</keyword>
<keyword id="KW-0812">Transmembrane</keyword>
<keyword id="KW-1133">Transmembrane helix</keyword>
<protein>
    <recommendedName>
        <fullName>Macrophage receptor MARCO</fullName>
    </recommendedName>
    <alternativeName>
        <fullName>Macrophage receptor with collagenous structure</fullName>
    </alternativeName>
    <alternativeName>
        <fullName>Scavenger receptor class A member 2</fullName>
    </alternativeName>
</protein>
<gene>
    <name type="primary">MARCO</name>
    <name type="synonym">SCARA2</name>
</gene>
<proteinExistence type="evidence at protein level"/>
<comment type="function">
    <text evidence="2 7 10">Pattern recognition receptor (PRR) which binds Gram-positive and Gram-negative bacteria (PubMed:9468508). Also plays a role in binding of unopsonized particles by alveolar macrophages (By similarity). Binds to the secretoglobin SCGB3A2 (PubMed:12847263).</text>
</comment>
<comment type="subunit">
    <text evidence="1">Homotrimer; disulfide-linked. Trimers may assemble in larger oligomers thus resulting in the creation of a large surface capable of interacting with very large ligands.</text>
</comment>
<comment type="subcellular location">
    <subcellularLocation>
        <location evidence="10">Cell membrane</location>
        <topology evidence="12">Single-pass type II membrane protein</topology>
    </subcellularLocation>
</comment>
<comment type="alternative products">
    <event type="alternative splicing"/>
    <isoform>
        <id>Q9UEW3-1</id>
        <name>1</name>
        <sequence type="displayed"/>
    </isoform>
    <isoform>
        <id>Q9UEW3-2</id>
        <name>2</name>
        <sequence type="described" ref="VSP_056698"/>
    </isoform>
</comment>
<comment type="tissue specificity">
    <text evidence="6 10">Expressed in alveolar macrophages (at protein level). Detected in macrophages from various tissues including thymus, kidney, Kupffer cells of liver, and spleen (PubMed:9468508).</text>
</comment>
<comment type="PTM">
    <text evidence="1">N-glycosylated.</text>
</comment>
<sequence length="520" mass="52658">MRNKKILKEDELLSETQQAAFHQIAMEPFEINVPKPKRRNGVNFSLAVVVIYLILLTAGAGLLVVQVLNLQARLRVLEMYFLNDTLAAEDSPSFSLLQSAHPGEHLAQGASRLQVLQAQLTWVRVSHEHLLQRVDNFTQNPGMFRIKGEQGAPGLQGHKGAMGMPGAPGPPGPPAEKGAKGAMGRDGATGPSGPQGPPGVKGEAGLQGPQGAPGKQGATGTPGPQGEKGSKGDGGLIGPKGETGTKGEKGDLGLPGSKGDRGMKGDAGVMGPPGAQGSKGDFGRPGPPGLAGFPGAKGDQGQPGLQGVPGPPGAVGHPGAKGEPGSAGSPGRAGLPGSPGSPGATGLKGSKGDTGLQGQQGRKGESGVPGPAGVKGEQGSPGLAGPKGAPGQAGQKGDQGVKGSSGEQGVKGEKGERGENSVSVRIVGSSNRGRAEVYYSGTWGTICDDEWQNSDAIVFCRMLGYSKGRALYKVGAGTGQIWLDNVQCRGTESTLWSCTKNSWGHHDCSHEEDAGVECSV</sequence>
<feature type="chain" id="PRO_0000181630" description="Macrophage receptor MARCO">
    <location>
        <begin position="1"/>
        <end position="520"/>
    </location>
</feature>
<feature type="topological domain" description="Cytoplasmic" evidence="1">
    <location>
        <begin position="1"/>
        <end position="43"/>
    </location>
</feature>
<feature type="transmembrane region" description="Helical; Signal-anchor for type II membrane protein" evidence="3">
    <location>
        <begin position="44"/>
        <end position="64"/>
    </location>
</feature>
<feature type="topological domain" description="Extracellular" evidence="1">
    <location>
        <begin position="65"/>
        <end position="520"/>
    </location>
</feature>
<feature type="domain" description="Collagen-like">
    <location>
        <begin position="147"/>
        <end position="419"/>
    </location>
</feature>
<feature type="domain" description="SRCR" evidence="4">
    <location>
        <begin position="424"/>
        <end position="519"/>
    </location>
</feature>
<feature type="region of interest" description="Disordered" evidence="5">
    <location>
        <begin position="142"/>
        <end position="423"/>
    </location>
</feature>
<feature type="compositionally biased region" description="Low complexity" evidence="5">
    <location>
        <begin position="203"/>
        <end position="227"/>
    </location>
</feature>
<feature type="compositionally biased region" description="Low complexity" evidence="5">
    <location>
        <begin position="290"/>
        <end position="345"/>
    </location>
</feature>
<feature type="compositionally biased region" description="Low complexity" evidence="5">
    <location>
        <begin position="380"/>
        <end position="398"/>
    </location>
</feature>
<feature type="compositionally biased region" description="Basic and acidic residues" evidence="5">
    <location>
        <begin position="410"/>
        <end position="419"/>
    </location>
</feature>
<feature type="glycosylation site" description="N-linked (GlcNAc...) asparagine" evidence="3">
    <location>
        <position position="83"/>
    </location>
</feature>
<feature type="glycosylation site" description="N-linked (GlcNAc...) asparagine" evidence="8 9">
    <location>
        <position position="136"/>
    </location>
</feature>
<feature type="disulfide bond" evidence="4 10">
    <location>
        <begin position="447"/>
        <end position="508"/>
    </location>
</feature>
<feature type="disulfide bond" evidence="4 10">
    <location>
        <begin position="460"/>
        <end position="518"/>
    </location>
</feature>
<feature type="disulfide bond" evidence="4 10">
    <location>
        <begin position="488"/>
        <end position="498"/>
    </location>
</feature>
<feature type="splice variant" id="VSP_056698" description="In isoform 2." evidence="11">
    <location>
        <begin position="1"/>
        <end position="78"/>
    </location>
</feature>
<feature type="sequence variant" id="VAR_024650" description="In dbSNP:rs6761637.">
    <original>F</original>
    <variation>S</variation>
    <location>
        <position position="282"/>
    </location>
</feature>
<feature type="sequence conflict" description="In Ref. 2; AAD41064." evidence="12" ref="2">
    <original>L</original>
    <variation>F</variation>
    <location>
        <position position="13"/>
    </location>
</feature>
<evidence type="ECO:0000250" key="1">
    <source>
        <dbReference type="UniProtKB" id="Q60754"/>
    </source>
</evidence>
<evidence type="ECO:0000250" key="2">
    <source>
        <dbReference type="UniProtKB" id="Q9WUB9"/>
    </source>
</evidence>
<evidence type="ECO:0000255" key="3"/>
<evidence type="ECO:0000255" key="4">
    <source>
        <dbReference type="PROSITE-ProRule" id="PRU00196"/>
    </source>
</evidence>
<evidence type="ECO:0000256" key="5">
    <source>
        <dbReference type="SAM" id="MobiDB-lite"/>
    </source>
</evidence>
<evidence type="ECO:0000269" key="6">
    <source>
    </source>
</evidence>
<evidence type="ECO:0000269" key="7">
    <source>
    </source>
</evidence>
<evidence type="ECO:0000269" key="8">
    <source>
    </source>
</evidence>
<evidence type="ECO:0000269" key="9">
    <source>
    </source>
</evidence>
<evidence type="ECO:0000269" key="10">
    <source>
    </source>
</evidence>
<evidence type="ECO:0000303" key="11">
    <source>
    </source>
</evidence>
<evidence type="ECO:0000305" key="12"/>
<name>MARCO_HUMAN</name>